<accession>Q9I0M1</accession>
<feature type="chain" id="PRO_0000207234" description="Leucyl/phenylalanyl-tRNA--protein transferase">
    <location>
        <begin position="1"/>
        <end position="226"/>
    </location>
</feature>
<gene>
    <name evidence="1" type="primary">aat</name>
    <name type="ordered locus">PA2617</name>
</gene>
<evidence type="ECO:0000255" key="1">
    <source>
        <dbReference type="HAMAP-Rule" id="MF_00688"/>
    </source>
</evidence>
<comment type="function">
    <text evidence="1">Functions in the N-end rule pathway of protein degradation where it conjugates Leu, Phe and, less efficiently, Met from aminoacyl-tRNAs to the N-termini of proteins containing an N-terminal arginine or lysine.</text>
</comment>
<comment type="catalytic activity">
    <reaction evidence="1">
        <text>N-terminal L-lysyl-[protein] + L-leucyl-tRNA(Leu) = N-terminal L-leucyl-L-lysyl-[protein] + tRNA(Leu) + H(+)</text>
        <dbReference type="Rhea" id="RHEA:12340"/>
        <dbReference type="Rhea" id="RHEA-COMP:9613"/>
        <dbReference type="Rhea" id="RHEA-COMP:9622"/>
        <dbReference type="Rhea" id="RHEA-COMP:12670"/>
        <dbReference type="Rhea" id="RHEA-COMP:12671"/>
        <dbReference type="ChEBI" id="CHEBI:15378"/>
        <dbReference type="ChEBI" id="CHEBI:65249"/>
        <dbReference type="ChEBI" id="CHEBI:78442"/>
        <dbReference type="ChEBI" id="CHEBI:78494"/>
        <dbReference type="ChEBI" id="CHEBI:133043"/>
        <dbReference type="EC" id="2.3.2.6"/>
    </reaction>
</comment>
<comment type="catalytic activity">
    <reaction evidence="1">
        <text>N-terminal L-arginyl-[protein] + L-leucyl-tRNA(Leu) = N-terminal L-leucyl-L-arginyl-[protein] + tRNA(Leu) + H(+)</text>
        <dbReference type="Rhea" id="RHEA:50416"/>
        <dbReference type="Rhea" id="RHEA-COMP:9613"/>
        <dbReference type="Rhea" id="RHEA-COMP:9622"/>
        <dbReference type="Rhea" id="RHEA-COMP:12672"/>
        <dbReference type="Rhea" id="RHEA-COMP:12673"/>
        <dbReference type="ChEBI" id="CHEBI:15378"/>
        <dbReference type="ChEBI" id="CHEBI:64719"/>
        <dbReference type="ChEBI" id="CHEBI:78442"/>
        <dbReference type="ChEBI" id="CHEBI:78494"/>
        <dbReference type="ChEBI" id="CHEBI:133044"/>
        <dbReference type="EC" id="2.3.2.6"/>
    </reaction>
</comment>
<comment type="catalytic activity">
    <reaction evidence="1">
        <text>L-phenylalanyl-tRNA(Phe) + an N-terminal L-alpha-aminoacyl-[protein] = an N-terminal L-phenylalanyl-L-alpha-aminoacyl-[protein] + tRNA(Phe)</text>
        <dbReference type="Rhea" id="RHEA:43632"/>
        <dbReference type="Rhea" id="RHEA-COMP:9668"/>
        <dbReference type="Rhea" id="RHEA-COMP:9699"/>
        <dbReference type="Rhea" id="RHEA-COMP:10636"/>
        <dbReference type="Rhea" id="RHEA-COMP:10637"/>
        <dbReference type="ChEBI" id="CHEBI:78442"/>
        <dbReference type="ChEBI" id="CHEBI:78531"/>
        <dbReference type="ChEBI" id="CHEBI:78597"/>
        <dbReference type="ChEBI" id="CHEBI:83561"/>
        <dbReference type="EC" id="2.3.2.6"/>
    </reaction>
</comment>
<comment type="subcellular location">
    <subcellularLocation>
        <location evidence="1">Cytoplasm</location>
    </subcellularLocation>
</comment>
<comment type="similarity">
    <text evidence="1">Belongs to the L/F-transferase family.</text>
</comment>
<sequence>MLTWLSRTDFDFPPLDKALQEPNGLLAAGGDLNPQRLVAAYRHGCFPWYQDGQPILWWSPDPRTVLFPDELHVSRSLAKCLRQQRFEVTFNRDFRAVIQACAAPRNYADGTWITTPMQLAYQELHLRGIAHSVEVWQERQLVGGLYGLAMGRLFFGESMFSRADNASKVGFVTLVRHLRDAGFVLIDCQMPTRHLHSLGARAISRGEFADYLQRYRDQPPTGDLDF</sequence>
<reference key="1">
    <citation type="journal article" date="2000" name="Nature">
        <title>Complete genome sequence of Pseudomonas aeruginosa PAO1, an opportunistic pathogen.</title>
        <authorList>
            <person name="Stover C.K."/>
            <person name="Pham X.-Q.T."/>
            <person name="Erwin A.L."/>
            <person name="Mizoguchi S.D."/>
            <person name="Warrener P."/>
            <person name="Hickey M.J."/>
            <person name="Brinkman F.S.L."/>
            <person name="Hufnagle W.O."/>
            <person name="Kowalik D.J."/>
            <person name="Lagrou M."/>
            <person name="Garber R.L."/>
            <person name="Goltry L."/>
            <person name="Tolentino E."/>
            <person name="Westbrock-Wadman S."/>
            <person name="Yuan Y."/>
            <person name="Brody L.L."/>
            <person name="Coulter S.N."/>
            <person name="Folger K.R."/>
            <person name="Kas A."/>
            <person name="Larbig K."/>
            <person name="Lim R.M."/>
            <person name="Smith K.A."/>
            <person name="Spencer D.H."/>
            <person name="Wong G.K.-S."/>
            <person name="Wu Z."/>
            <person name="Paulsen I.T."/>
            <person name="Reizer J."/>
            <person name="Saier M.H. Jr."/>
            <person name="Hancock R.E.W."/>
            <person name="Lory S."/>
            <person name="Olson M.V."/>
        </authorList>
    </citation>
    <scope>NUCLEOTIDE SEQUENCE [LARGE SCALE GENOMIC DNA]</scope>
    <source>
        <strain>ATCC 15692 / DSM 22644 / CIP 104116 / JCM 14847 / LMG 12228 / 1C / PRS 101 / PAO1</strain>
    </source>
</reference>
<dbReference type="EC" id="2.3.2.6" evidence="1"/>
<dbReference type="EMBL" id="AE004091">
    <property type="protein sequence ID" value="AAG06005.1"/>
    <property type="molecule type" value="Genomic_DNA"/>
</dbReference>
<dbReference type="PIR" id="G83318">
    <property type="entry name" value="G83318"/>
</dbReference>
<dbReference type="RefSeq" id="NP_251307.1">
    <property type="nucleotide sequence ID" value="NC_002516.2"/>
</dbReference>
<dbReference type="RefSeq" id="WP_003113368.1">
    <property type="nucleotide sequence ID" value="NZ_QZGE01000008.1"/>
</dbReference>
<dbReference type="SMR" id="Q9I0M1"/>
<dbReference type="FunCoup" id="Q9I0M1">
    <property type="interactions" value="321"/>
</dbReference>
<dbReference type="STRING" id="208964.PA2617"/>
<dbReference type="PaxDb" id="208964-PA2617"/>
<dbReference type="DNASU" id="882323"/>
<dbReference type="GeneID" id="882323"/>
<dbReference type="KEGG" id="pae:PA2617"/>
<dbReference type="PATRIC" id="fig|208964.12.peg.2739"/>
<dbReference type="PseudoCAP" id="PA2617"/>
<dbReference type="HOGENOM" id="CLU_075045_0_0_6"/>
<dbReference type="InParanoid" id="Q9I0M1"/>
<dbReference type="OrthoDB" id="9790282at2"/>
<dbReference type="PhylomeDB" id="Q9I0M1"/>
<dbReference type="BioCyc" id="PAER208964:G1FZ6-2657-MONOMER"/>
<dbReference type="Proteomes" id="UP000002438">
    <property type="component" value="Chromosome"/>
</dbReference>
<dbReference type="GO" id="GO:0005737">
    <property type="term" value="C:cytoplasm"/>
    <property type="evidence" value="ECO:0000318"/>
    <property type="project" value="GO_Central"/>
</dbReference>
<dbReference type="GO" id="GO:0008914">
    <property type="term" value="F:leucyl-tRNA--protein transferase activity"/>
    <property type="evidence" value="ECO:0000318"/>
    <property type="project" value="GO_Central"/>
</dbReference>
<dbReference type="GO" id="GO:0030163">
    <property type="term" value="P:protein catabolic process"/>
    <property type="evidence" value="ECO:0007669"/>
    <property type="project" value="UniProtKB-UniRule"/>
</dbReference>
<dbReference type="FunFam" id="3.30.70.3550:FF:000001">
    <property type="entry name" value="Leucyl/phenylalanyl-tRNA--protein transferase"/>
    <property type="match status" value="1"/>
</dbReference>
<dbReference type="FunFam" id="3.40.630.70:FF:000003">
    <property type="entry name" value="Leucyl/phenylalanyl-tRNA--protein transferase"/>
    <property type="match status" value="1"/>
</dbReference>
<dbReference type="Gene3D" id="3.40.630.70">
    <property type="entry name" value="Leucyl/phenylalanyl-tRNA-protein transferase, C-terminal domain"/>
    <property type="match status" value="1"/>
</dbReference>
<dbReference type="Gene3D" id="3.30.70.3550">
    <property type="entry name" value="Leucyl/phenylalanyl-tRNA-protein transferase, N-terminal domain"/>
    <property type="match status" value="1"/>
</dbReference>
<dbReference type="HAMAP" id="MF_00688">
    <property type="entry name" value="Leu_Phe_trans"/>
    <property type="match status" value="1"/>
</dbReference>
<dbReference type="InterPro" id="IPR016181">
    <property type="entry name" value="Acyl_CoA_acyltransferase"/>
</dbReference>
<dbReference type="InterPro" id="IPR004616">
    <property type="entry name" value="Leu/Phe-tRNA_Trfase"/>
</dbReference>
<dbReference type="InterPro" id="IPR042203">
    <property type="entry name" value="Leu/Phe-tRNA_Trfase_C"/>
</dbReference>
<dbReference type="InterPro" id="IPR042221">
    <property type="entry name" value="Leu/Phe-tRNA_Trfase_N"/>
</dbReference>
<dbReference type="NCBIfam" id="TIGR00667">
    <property type="entry name" value="aat"/>
    <property type="match status" value="1"/>
</dbReference>
<dbReference type="PANTHER" id="PTHR30098">
    <property type="entry name" value="LEUCYL/PHENYLALANYL-TRNA--PROTEIN TRANSFERASE"/>
    <property type="match status" value="1"/>
</dbReference>
<dbReference type="PANTHER" id="PTHR30098:SF2">
    <property type="entry name" value="LEUCYL_PHENYLALANYL-TRNA--PROTEIN TRANSFERASE"/>
    <property type="match status" value="1"/>
</dbReference>
<dbReference type="Pfam" id="PF03588">
    <property type="entry name" value="Leu_Phe_trans"/>
    <property type="match status" value="1"/>
</dbReference>
<dbReference type="SUPFAM" id="SSF55729">
    <property type="entry name" value="Acyl-CoA N-acyltransferases (Nat)"/>
    <property type="match status" value="1"/>
</dbReference>
<name>LFTR_PSEAE</name>
<proteinExistence type="inferred from homology"/>
<organism>
    <name type="scientific">Pseudomonas aeruginosa (strain ATCC 15692 / DSM 22644 / CIP 104116 / JCM 14847 / LMG 12228 / 1C / PRS 101 / PAO1)</name>
    <dbReference type="NCBI Taxonomy" id="208964"/>
    <lineage>
        <taxon>Bacteria</taxon>
        <taxon>Pseudomonadati</taxon>
        <taxon>Pseudomonadota</taxon>
        <taxon>Gammaproteobacteria</taxon>
        <taxon>Pseudomonadales</taxon>
        <taxon>Pseudomonadaceae</taxon>
        <taxon>Pseudomonas</taxon>
    </lineage>
</organism>
<keyword id="KW-0012">Acyltransferase</keyword>
<keyword id="KW-0963">Cytoplasm</keyword>
<keyword id="KW-1185">Reference proteome</keyword>
<keyword id="KW-0808">Transferase</keyword>
<protein>
    <recommendedName>
        <fullName evidence="1">Leucyl/phenylalanyl-tRNA--protein transferase</fullName>
        <ecNumber evidence="1">2.3.2.6</ecNumber>
    </recommendedName>
    <alternativeName>
        <fullName evidence="1">L/F-transferase</fullName>
    </alternativeName>
    <alternativeName>
        <fullName evidence="1">Leucyltransferase</fullName>
    </alternativeName>
    <alternativeName>
        <fullName evidence="1">Phenyalanyltransferase</fullName>
    </alternativeName>
</protein>